<keyword id="KW-0217">Developmental protein</keyword>
<keyword id="KW-0238">DNA-binding</keyword>
<keyword id="KW-0371">Homeobox</keyword>
<keyword id="KW-0539">Nucleus</keyword>
<keyword id="KW-1267">Proteomics identification</keyword>
<keyword id="KW-1185">Reference proteome</keyword>
<keyword id="KW-0804">Transcription</keyword>
<keyword id="KW-0805">Transcription regulation</keyword>
<gene>
    <name type="primary">HOXD1</name>
    <name type="synonym">HOX4</name>
    <name type="synonym">HOX4G</name>
</gene>
<evidence type="ECO:0000255" key="1">
    <source>
        <dbReference type="PROSITE-ProRule" id="PRU00108"/>
    </source>
</evidence>
<evidence type="ECO:0000256" key="2">
    <source>
        <dbReference type="SAM" id="MobiDB-lite"/>
    </source>
</evidence>
<evidence type="ECO:0000305" key="3"/>
<sequence length="328" mass="34093">MSSYLEYVSCSSSGGVGGDVLSLAPKFCRSDARPVALQPAFPLGNGDGAFVSCLPLAAARPSPSPPAAPARPSVPPPAAPQYAQCTLEGAYEPGAAPAAAAGGADYGFLGSGPAYDFPGVLGRAADDGGSHVHYATSAVFSGGGSFLLSGQVDYAAFGEPGPFPACLKASADGHPGAFQTASPAPGTYPKSVSPASGLPAAFSTFEWMKVKRNASKKGKLAEYGAASPSSAIRTNFSTKQLTELEKEFHFNKYLTRARRIEIANCLHLNDTQVKIWFQNRRMKQKKREREGLLATAIPVAPLQLPLSGTTPTKFIKNPGSPSQSQEPS</sequence>
<feature type="chain" id="PRO_0000200201" description="Homeobox protein Hox-D1">
    <location>
        <begin position="1"/>
        <end position="328"/>
    </location>
</feature>
<feature type="DNA-binding region" description="Homeobox" evidence="1">
    <location>
        <begin position="229"/>
        <end position="288"/>
    </location>
</feature>
<feature type="region of interest" description="Disordered" evidence="2">
    <location>
        <begin position="305"/>
        <end position="328"/>
    </location>
</feature>
<feature type="short sequence motif" description="Antp-type hexapeptide">
    <location>
        <begin position="204"/>
        <end position="209"/>
    </location>
</feature>
<feature type="compositionally biased region" description="Polar residues" evidence="2">
    <location>
        <begin position="319"/>
        <end position="328"/>
    </location>
</feature>
<feature type="sequence variant" id="VAR_034003" description="In dbSNP:rs6710142.">
    <original>A</original>
    <variation>T</variation>
    <location>
        <position position="296"/>
    </location>
</feature>
<accession>Q9GZZ0</accession>
<accession>B2RAB4</accession>
<organism>
    <name type="scientific">Homo sapiens</name>
    <name type="common">Human</name>
    <dbReference type="NCBI Taxonomy" id="9606"/>
    <lineage>
        <taxon>Eukaryota</taxon>
        <taxon>Metazoa</taxon>
        <taxon>Chordata</taxon>
        <taxon>Craniata</taxon>
        <taxon>Vertebrata</taxon>
        <taxon>Euteleostomi</taxon>
        <taxon>Mammalia</taxon>
        <taxon>Eutheria</taxon>
        <taxon>Euarchontoglires</taxon>
        <taxon>Primates</taxon>
        <taxon>Haplorrhini</taxon>
        <taxon>Catarrhini</taxon>
        <taxon>Hominidae</taxon>
        <taxon>Homo</taxon>
    </lineage>
</organism>
<dbReference type="EMBL" id="AF202118">
    <property type="protein sequence ID" value="AAG29939.1"/>
    <property type="molecule type" value="Genomic_DNA"/>
</dbReference>
<dbReference type="EMBL" id="AF241528">
    <property type="protein sequence ID" value="AAG44444.1"/>
    <property type="molecule type" value="mRNA"/>
</dbReference>
<dbReference type="EMBL" id="AK314120">
    <property type="protein sequence ID" value="BAG36811.1"/>
    <property type="molecule type" value="mRNA"/>
</dbReference>
<dbReference type="EMBL" id="CH471058">
    <property type="protein sequence ID" value="EAX11080.1"/>
    <property type="molecule type" value="Genomic_DNA"/>
</dbReference>
<dbReference type="CCDS" id="CCDS2271.1"/>
<dbReference type="RefSeq" id="NP_078777.1">
    <property type="nucleotide sequence ID" value="NM_024501.3"/>
</dbReference>
<dbReference type="SMR" id="Q9GZZ0"/>
<dbReference type="BioGRID" id="109471">
    <property type="interactions" value="8"/>
</dbReference>
<dbReference type="FunCoup" id="Q9GZZ0">
    <property type="interactions" value="1171"/>
</dbReference>
<dbReference type="IntAct" id="Q9GZZ0">
    <property type="interactions" value="2"/>
</dbReference>
<dbReference type="STRING" id="9606.ENSP00000328598"/>
<dbReference type="iPTMnet" id="Q9GZZ0"/>
<dbReference type="PhosphoSitePlus" id="Q9GZZ0"/>
<dbReference type="BioMuta" id="HOXD1"/>
<dbReference type="DMDM" id="17378648"/>
<dbReference type="MassIVE" id="Q9GZZ0"/>
<dbReference type="PaxDb" id="9606-ENSP00000328598"/>
<dbReference type="PeptideAtlas" id="Q9GZZ0"/>
<dbReference type="ProteomicsDB" id="80181"/>
<dbReference type="Antibodypedia" id="33916">
    <property type="antibodies" value="169 antibodies from 21 providers"/>
</dbReference>
<dbReference type="DNASU" id="3231"/>
<dbReference type="Ensembl" id="ENST00000331462.6">
    <property type="protein sequence ID" value="ENSP00000328598.4"/>
    <property type="gene ID" value="ENSG00000128645.15"/>
</dbReference>
<dbReference type="GeneID" id="3231"/>
<dbReference type="KEGG" id="hsa:3231"/>
<dbReference type="MANE-Select" id="ENST00000331462.6">
    <property type="protein sequence ID" value="ENSP00000328598.4"/>
    <property type="RefSeq nucleotide sequence ID" value="NM_024501.3"/>
    <property type="RefSeq protein sequence ID" value="NP_078777.1"/>
</dbReference>
<dbReference type="UCSC" id="uc002ukv.5">
    <property type="organism name" value="human"/>
</dbReference>
<dbReference type="AGR" id="HGNC:5132"/>
<dbReference type="CTD" id="3231"/>
<dbReference type="DisGeNET" id="3231"/>
<dbReference type="GeneCards" id="HOXD1"/>
<dbReference type="HGNC" id="HGNC:5132">
    <property type="gene designation" value="HOXD1"/>
</dbReference>
<dbReference type="HPA" id="ENSG00000128645">
    <property type="expression patterns" value="Tissue enhanced (brain, epididymis)"/>
</dbReference>
<dbReference type="MIM" id="142987">
    <property type="type" value="gene"/>
</dbReference>
<dbReference type="neXtProt" id="NX_Q9GZZ0"/>
<dbReference type="OpenTargets" id="ENSG00000128645"/>
<dbReference type="PharmGKB" id="PA29406"/>
<dbReference type="VEuPathDB" id="HostDB:ENSG00000128645"/>
<dbReference type="eggNOG" id="KOG0489">
    <property type="taxonomic scope" value="Eukaryota"/>
</dbReference>
<dbReference type="GeneTree" id="ENSGT00940000161892"/>
<dbReference type="HOGENOM" id="CLU_058839_0_0_1"/>
<dbReference type="InParanoid" id="Q9GZZ0"/>
<dbReference type="OMA" id="GPAYDFP"/>
<dbReference type="OrthoDB" id="6159439at2759"/>
<dbReference type="PAN-GO" id="Q9GZZ0">
    <property type="GO annotations" value="4 GO annotations based on evolutionary models"/>
</dbReference>
<dbReference type="PhylomeDB" id="Q9GZZ0"/>
<dbReference type="TreeFam" id="TF317730"/>
<dbReference type="PathwayCommons" id="Q9GZZ0"/>
<dbReference type="Reactome" id="R-HSA-5617472">
    <property type="pathway name" value="Activation of anterior HOX genes in hindbrain development during early embryogenesis"/>
</dbReference>
<dbReference type="SignaLink" id="Q9GZZ0"/>
<dbReference type="SIGNOR" id="Q9GZZ0"/>
<dbReference type="BioGRID-ORCS" id="3231">
    <property type="hits" value="14 hits in 1175 CRISPR screens"/>
</dbReference>
<dbReference type="ChiTaRS" id="HOXD1">
    <property type="organism name" value="human"/>
</dbReference>
<dbReference type="GeneWiki" id="HOXD1"/>
<dbReference type="GenomeRNAi" id="3231"/>
<dbReference type="Pharos" id="Q9GZZ0">
    <property type="development level" value="Tbio"/>
</dbReference>
<dbReference type="PRO" id="PR:Q9GZZ0"/>
<dbReference type="Proteomes" id="UP000005640">
    <property type="component" value="Chromosome 2"/>
</dbReference>
<dbReference type="RNAct" id="Q9GZZ0">
    <property type="molecule type" value="protein"/>
</dbReference>
<dbReference type="Bgee" id="ENSG00000128645">
    <property type="expression patterns" value="Expressed in corpus epididymis and 130 other cell types or tissues"/>
</dbReference>
<dbReference type="GO" id="GO:0000785">
    <property type="term" value="C:chromatin"/>
    <property type="evidence" value="ECO:0000247"/>
    <property type="project" value="NTNU_SB"/>
</dbReference>
<dbReference type="GO" id="GO:0005654">
    <property type="term" value="C:nucleoplasm"/>
    <property type="evidence" value="ECO:0000314"/>
    <property type="project" value="HPA"/>
</dbReference>
<dbReference type="GO" id="GO:0005634">
    <property type="term" value="C:nucleus"/>
    <property type="evidence" value="ECO:0000318"/>
    <property type="project" value="GO_Central"/>
</dbReference>
<dbReference type="GO" id="GO:0000981">
    <property type="term" value="F:DNA-binding transcription factor activity, RNA polymerase II-specific"/>
    <property type="evidence" value="ECO:0000247"/>
    <property type="project" value="NTNU_SB"/>
</dbReference>
<dbReference type="GO" id="GO:0000978">
    <property type="term" value="F:RNA polymerase II cis-regulatory region sequence-specific DNA binding"/>
    <property type="evidence" value="ECO:0000318"/>
    <property type="project" value="GO_Central"/>
</dbReference>
<dbReference type="GO" id="GO:1990837">
    <property type="term" value="F:sequence-specific double-stranded DNA binding"/>
    <property type="evidence" value="ECO:0000314"/>
    <property type="project" value="ARUK-UCL"/>
</dbReference>
<dbReference type="GO" id="GO:0048706">
    <property type="term" value="P:embryonic skeletal system development"/>
    <property type="evidence" value="ECO:0007669"/>
    <property type="project" value="Ensembl"/>
</dbReference>
<dbReference type="GO" id="GO:0030182">
    <property type="term" value="P:neuron differentiation"/>
    <property type="evidence" value="ECO:0007669"/>
    <property type="project" value="Ensembl"/>
</dbReference>
<dbReference type="GO" id="GO:0006357">
    <property type="term" value="P:regulation of transcription by RNA polymerase II"/>
    <property type="evidence" value="ECO:0000318"/>
    <property type="project" value="GO_Central"/>
</dbReference>
<dbReference type="GO" id="GO:0019233">
    <property type="term" value="P:sensory perception of pain"/>
    <property type="evidence" value="ECO:0007669"/>
    <property type="project" value="Ensembl"/>
</dbReference>
<dbReference type="CDD" id="cd00086">
    <property type="entry name" value="homeodomain"/>
    <property type="match status" value="1"/>
</dbReference>
<dbReference type="FunFam" id="1.10.10.60:FF:000113">
    <property type="entry name" value="homeobox protein Hox-B1"/>
    <property type="match status" value="1"/>
</dbReference>
<dbReference type="Gene3D" id="1.10.10.60">
    <property type="entry name" value="Homeodomain-like"/>
    <property type="match status" value="1"/>
</dbReference>
<dbReference type="InterPro" id="IPR001356">
    <property type="entry name" value="HD"/>
</dbReference>
<dbReference type="InterPro" id="IPR020479">
    <property type="entry name" value="HD_metazoa"/>
</dbReference>
<dbReference type="InterPro" id="IPR017970">
    <property type="entry name" value="Homeobox_CS"/>
</dbReference>
<dbReference type="InterPro" id="IPR009057">
    <property type="entry name" value="Homeodomain-like_sf"/>
</dbReference>
<dbReference type="InterPro" id="IPR046327">
    <property type="entry name" value="HXA1/B1/D1"/>
</dbReference>
<dbReference type="PANTHER" id="PTHR45946:SF1">
    <property type="entry name" value="HOMEOBOX PROTEIN HOX-D1"/>
    <property type="match status" value="1"/>
</dbReference>
<dbReference type="PANTHER" id="PTHR45946">
    <property type="entry name" value="HOMEOBOX PROTEIN ROUGH-RELATED"/>
    <property type="match status" value="1"/>
</dbReference>
<dbReference type="Pfam" id="PF00046">
    <property type="entry name" value="Homeodomain"/>
    <property type="match status" value="1"/>
</dbReference>
<dbReference type="PRINTS" id="PR00024">
    <property type="entry name" value="HOMEOBOX"/>
</dbReference>
<dbReference type="SMART" id="SM00389">
    <property type="entry name" value="HOX"/>
    <property type="match status" value="1"/>
</dbReference>
<dbReference type="SUPFAM" id="SSF46689">
    <property type="entry name" value="Homeodomain-like"/>
    <property type="match status" value="1"/>
</dbReference>
<dbReference type="PROSITE" id="PS00027">
    <property type="entry name" value="HOMEOBOX_1"/>
    <property type="match status" value="1"/>
</dbReference>
<dbReference type="PROSITE" id="PS50071">
    <property type="entry name" value="HOMEOBOX_2"/>
    <property type="match status" value="1"/>
</dbReference>
<comment type="function">
    <text>Sequence-specific transcription factor which is part of a developmental regulatory system that provides cells with specific positional identities on the anterior-posterior axis. Acts on the anterior body structures.</text>
</comment>
<comment type="subcellular location">
    <subcellularLocation>
        <location>Nucleus</location>
    </subcellularLocation>
</comment>
<comment type="similarity">
    <text evidence="3">Belongs to the Antp homeobox family. Labial subfamily.</text>
</comment>
<name>HXD1_HUMAN</name>
<protein>
    <recommendedName>
        <fullName>Homeobox protein Hox-D1</fullName>
    </recommendedName>
    <alternativeName>
        <fullName>Homeobox protein Hox-GG</fullName>
    </alternativeName>
</protein>
<proteinExistence type="evidence at protein level"/>
<reference key="1">
    <citation type="journal article" date="2000" name="Mol. Biol. Rep.">
        <title>Isolation and characterization of the human homeobox gene HOX D1.</title>
        <authorList>
            <person name="Appukuttan B."/>
            <person name="Sood R."/>
            <person name="Ott S."/>
            <person name="Makalowska I."/>
            <person name="Patel R.J."/>
            <person name="Wang X."/>
            <person name="Robbins C.M."/>
            <person name="Brownstein M.J."/>
            <person name="Stout J.T."/>
        </authorList>
    </citation>
    <scope>NUCLEOTIDE SEQUENCE [GENOMIC DNA]</scope>
</reference>
<reference key="2">
    <citation type="submission" date="2000-03" db="EMBL/GenBank/DDBJ databases">
        <title>Cloning and expression analysis of human HOXD1; a maternally-derived homeobox transcription factor abundant in unfertilized human oocytes.</title>
        <authorList>
            <person name="Adjaye J."/>
        </authorList>
    </citation>
    <scope>NUCLEOTIDE SEQUENCE [MRNA]</scope>
    <source>
        <tissue>Oocyte</tissue>
    </source>
</reference>
<reference key="3">
    <citation type="journal article" date="2004" name="Nat. Genet.">
        <title>Complete sequencing and characterization of 21,243 full-length human cDNAs.</title>
        <authorList>
            <person name="Ota T."/>
            <person name="Suzuki Y."/>
            <person name="Nishikawa T."/>
            <person name="Otsuki T."/>
            <person name="Sugiyama T."/>
            <person name="Irie R."/>
            <person name="Wakamatsu A."/>
            <person name="Hayashi K."/>
            <person name="Sato H."/>
            <person name="Nagai K."/>
            <person name="Kimura K."/>
            <person name="Makita H."/>
            <person name="Sekine M."/>
            <person name="Obayashi M."/>
            <person name="Nishi T."/>
            <person name="Shibahara T."/>
            <person name="Tanaka T."/>
            <person name="Ishii S."/>
            <person name="Yamamoto J."/>
            <person name="Saito K."/>
            <person name="Kawai Y."/>
            <person name="Isono Y."/>
            <person name="Nakamura Y."/>
            <person name="Nagahari K."/>
            <person name="Murakami K."/>
            <person name="Yasuda T."/>
            <person name="Iwayanagi T."/>
            <person name="Wagatsuma M."/>
            <person name="Shiratori A."/>
            <person name="Sudo H."/>
            <person name="Hosoiri T."/>
            <person name="Kaku Y."/>
            <person name="Kodaira H."/>
            <person name="Kondo H."/>
            <person name="Sugawara M."/>
            <person name="Takahashi M."/>
            <person name="Kanda K."/>
            <person name="Yokoi T."/>
            <person name="Furuya T."/>
            <person name="Kikkawa E."/>
            <person name="Omura Y."/>
            <person name="Abe K."/>
            <person name="Kamihara K."/>
            <person name="Katsuta N."/>
            <person name="Sato K."/>
            <person name="Tanikawa M."/>
            <person name="Yamazaki M."/>
            <person name="Ninomiya K."/>
            <person name="Ishibashi T."/>
            <person name="Yamashita H."/>
            <person name="Murakawa K."/>
            <person name="Fujimori K."/>
            <person name="Tanai H."/>
            <person name="Kimata M."/>
            <person name="Watanabe M."/>
            <person name="Hiraoka S."/>
            <person name="Chiba Y."/>
            <person name="Ishida S."/>
            <person name="Ono Y."/>
            <person name="Takiguchi S."/>
            <person name="Watanabe S."/>
            <person name="Yosida M."/>
            <person name="Hotuta T."/>
            <person name="Kusano J."/>
            <person name="Kanehori K."/>
            <person name="Takahashi-Fujii A."/>
            <person name="Hara H."/>
            <person name="Tanase T.-O."/>
            <person name="Nomura Y."/>
            <person name="Togiya S."/>
            <person name="Komai F."/>
            <person name="Hara R."/>
            <person name="Takeuchi K."/>
            <person name="Arita M."/>
            <person name="Imose N."/>
            <person name="Musashino K."/>
            <person name="Yuuki H."/>
            <person name="Oshima A."/>
            <person name="Sasaki N."/>
            <person name="Aotsuka S."/>
            <person name="Yoshikawa Y."/>
            <person name="Matsunawa H."/>
            <person name="Ichihara T."/>
            <person name="Shiohata N."/>
            <person name="Sano S."/>
            <person name="Moriya S."/>
            <person name="Momiyama H."/>
            <person name="Satoh N."/>
            <person name="Takami S."/>
            <person name="Terashima Y."/>
            <person name="Suzuki O."/>
            <person name="Nakagawa S."/>
            <person name="Senoh A."/>
            <person name="Mizoguchi H."/>
            <person name="Goto Y."/>
            <person name="Shimizu F."/>
            <person name="Wakebe H."/>
            <person name="Hishigaki H."/>
            <person name="Watanabe T."/>
            <person name="Sugiyama A."/>
            <person name="Takemoto M."/>
            <person name="Kawakami B."/>
            <person name="Yamazaki M."/>
            <person name="Watanabe K."/>
            <person name="Kumagai A."/>
            <person name="Itakura S."/>
            <person name="Fukuzumi Y."/>
            <person name="Fujimori Y."/>
            <person name="Komiyama M."/>
            <person name="Tashiro H."/>
            <person name="Tanigami A."/>
            <person name="Fujiwara T."/>
            <person name="Ono T."/>
            <person name="Yamada K."/>
            <person name="Fujii Y."/>
            <person name="Ozaki K."/>
            <person name="Hirao M."/>
            <person name="Ohmori Y."/>
            <person name="Kawabata A."/>
            <person name="Hikiji T."/>
            <person name="Kobatake N."/>
            <person name="Inagaki H."/>
            <person name="Ikema Y."/>
            <person name="Okamoto S."/>
            <person name="Okitani R."/>
            <person name="Kawakami T."/>
            <person name="Noguchi S."/>
            <person name="Itoh T."/>
            <person name="Shigeta K."/>
            <person name="Senba T."/>
            <person name="Matsumura K."/>
            <person name="Nakajima Y."/>
            <person name="Mizuno T."/>
            <person name="Morinaga M."/>
            <person name="Sasaki M."/>
            <person name="Togashi T."/>
            <person name="Oyama M."/>
            <person name="Hata H."/>
            <person name="Watanabe M."/>
            <person name="Komatsu T."/>
            <person name="Mizushima-Sugano J."/>
            <person name="Satoh T."/>
            <person name="Shirai Y."/>
            <person name="Takahashi Y."/>
            <person name="Nakagawa K."/>
            <person name="Okumura K."/>
            <person name="Nagase T."/>
            <person name="Nomura N."/>
            <person name="Kikuchi H."/>
            <person name="Masuho Y."/>
            <person name="Yamashita R."/>
            <person name="Nakai K."/>
            <person name="Yada T."/>
            <person name="Nakamura Y."/>
            <person name="Ohara O."/>
            <person name="Isogai T."/>
            <person name="Sugano S."/>
        </authorList>
    </citation>
    <scope>NUCLEOTIDE SEQUENCE [LARGE SCALE MRNA]</scope>
    <source>
        <tissue>Caudate nucleus</tissue>
    </source>
</reference>
<reference key="4">
    <citation type="submission" date="2005-09" db="EMBL/GenBank/DDBJ databases">
        <authorList>
            <person name="Mural R.J."/>
            <person name="Istrail S."/>
            <person name="Sutton G.G."/>
            <person name="Florea L."/>
            <person name="Halpern A.L."/>
            <person name="Mobarry C.M."/>
            <person name="Lippert R."/>
            <person name="Walenz B."/>
            <person name="Shatkay H."/>
            <person name="Dew I."/>
            <person name="Miller J.R."/>
            <person name="Flanigan M.J."/>
            <person name="Edwards N.J."/>
            <person name="Bolanos R."/>
            <person name="Fasulo D."/>
            <person name="Halldorsson B.V."/>
            <person name="Hannenhalli S."/>
            <person name="Turner R."/>
            <person name="Yooseph S."/>
            <person name="Lu F."/>
            <person name="Nusskern D.R."/>
            <person name="Shue B.C."/>
            <person name="Zheng X.H."/>
            <person name="Zhong F."/>
            <person name="Delcher A.L."/>
            <person name="Huson D.H."/>
            <person name="Kravitz S.A."/>
            <person name="Mouchard L."/>
            <person name="Reinert K."/>
            <person name="Remington K.A."/>
            <person name="Clark A.G."/>
            <person name="Waterman M.S."/>
            <person name="Eichler E.E."/>
            <person name="Adams M.D."/>
            <person name="Hunkapiller M.W."/>
            <person name="Myers E.W."/>
            <person name="Venter J.C."/>
        </authorList>
    </citation>
    <scope>NUCLEOTIDE SEQUENCE [LARGE SCALE GENOMIC DNA]</scope>
</reference>